<sequence>MSAAGASERERLVALLRERSFEQKRVVLASGRESDFFIDCKQSVLTAEGHALVGSLMFEALGALPRCEAVAGVELGGCPLASAVSLTSFLRGRPLPALYVRKEVKDHGSRRLVEGDRGLVPGMPVAILEDVITTGGSTLKAVEKLRTAGASVVGVIALVDRLEGGAEAIRAAGLPVVAICTRRDFIPDNPPG</sequence>
<accession>A9GUD3</accession>
<organism>
    <name type="scientific">Sorangium cellulosum (strain So ce56)</name>
    <name type="common">Polyangium cellulosum (strain So ce56)</name>
    <dbReference type="NCBI Taxonomy" id="448385"/>
    <lineage>
        <taxon>Bacteria</taxon>
        <taxon>Pseudomonadati</taxon>
        <taxon>Myxococcota</taxon>
        <taxon>Polyangia</taxon>
        <taxon>Polyangiales</taxon>
        <taxon>Polyangiaceae</taxon>
        <taxon>Sorangium</taxon>
    </lineage>
</organism>
<protein>
    <recommendedName>
        <fullName evidence="1">Orotate phosphoribosyltransferase</fullName>
        <shortName evidence="1">OPRT</shortName>
        <shortName evidence="1">OPRTase</shortName>
        <ecNumber evidence="1">2.4.2.10</ecNumber>
    </recommendedName>
</protein>
<keyword id="KW-0328">Glycosyltransferase</keyword>
<keyword id="KW-0460">Magnesium</keyword>
<keyword id="KW-0665">Pyrimidine biosynthesis</keyword>
<keyword id="KW-1185">Reference proteome</keyword>
<keyword id="KW-0808">Transferase</keyword>
<comment type="function">
    <text evidence="1">Catalyzes the transfer of a ribosyl phosphate group from 5-phosphoribose 1-diphosphate to orotate, leading to the formation of orotidine monophosphate (OMP).</text>
</comment>
<comment type="catalytic activity">
    <reaction evidence="1">
        <text>orotidine 5'-phosphate + diphosphate = orotate + 5-phospho-alpha-D-ribose 1-diphosphate</text>
        <dbReference type="Rhea" id="RHEA:10380"/>
        <dbReference type="ChEBI" id="CHEBI:30839"/>
        <dbReference type="ChEBI" id="CHEBI:33019"/>
        <dbReference type="ChEBI" id="CHEBI:57538"/>
        <dbReference type="ChEBI" id="CHEBI:58017"/>
        <dbReference type="EC" id="2.4.2.10"/>
    </reaction>
</comment>
<comment type="cofactor">
    <cofactor evidence="1">
        <name>Mg(2+)</name>
        <dbReference type="ChEBI" id="CHEBI:18420"/>
    </cofactor>
</comment>
<comment type="pathway">
    <text evidence="1">Pyrimidine metabolism; UMP biosynthesis via de novo pathway; UMP from orotate: step 1/2.</text>
</comment>
<comment type="subunit">
    <text evidence="1">Homodimer.</text>
</comment>
<comment type="similarity">
    <text evidence="1">Belongs to the purine/pyrimidine phosphoribosyltransferase family. PyrE subfamily.</text>
</comment>
<dbReference type="EC" id="2.4.2.10" evidence="1"/>
<dbReference type="EMBL" id="AM746676">
    <property type="protein sequence ID" value="CAN90603.1"/>
    <property type="molecule type" value="Genomic_DNA"/>
</dbReference>
<dbReference type="RefSeq" id="WP_012233081.1">
    <property type="nucleotide sequence ID" value="NC_010162.1"/>
</dbReference>
<dbReference type="SMR" id="A9GUD3"/>
<dbReference type="STRING" id="448385.sce0446"/>
<dbReference type="KEGG" id="scl:sce0446"/>
<dbReference type="eggNOG" id="COG0461">
    <property type="taxonomic scope" value="Bacteria"/>
</dbReference>
<dbReference type="HOGENOM" id="CLU_074878_2_1_7"/>
<dbReference type="OrthoDB" id="9785917at2"/>
<dbReference type="BioCyc" id="SCEL448385:SCE_RS02345-MONOMER"/>
<dbReference type="UniPathway" id="UPA00070">
    <property type="reaction ID" value="UER00119"/>
</dbReference>
<dbReference type="Proteomes" id="UP000002139">
    <property type="component" value="Chromosome"/>
</dbReference>
<dbReference type="GO" id="GO:0000287">
    <property type="term" value="F:magnesium ion binding"/>
    <property type="evidence" value="ECO:0007669"/>
    <property type="project" value="UniProtKB-UniRule"/>
</dbReference>
<dbReference type="GO" id="GO:0004588">
    <property type="term" value="F:orotate phosphoribosyltransferase activity"/>
    <property type="evidence" value="ECO:0007669"/>
    <property type="project" value="UniProtKB-UniRule"/>
</dbReference>
<dbReference type="GO" id="GO:0044205">
    <property type="term" value="P:'de novo' UMP biosynthetic process"/>
    <property type="evidence" value="ECO:0007669"/>
    <property type="project" value="UniProtKB-UniRule"/>
</dbReference>
<dbReference type="GO" id="GO:0019856">
    <property type="term" value="P:pyrimidine nucleobase biosynthetic process"/>
    <property type="evidence" value="ECO:0007669"/>
    <property type="project" value="TreeGrafter"/>
</dbReference>
<dbReference type="CDD" id="cd06223">
    <property type="entry name" value="PRTases_typeI"/>
    <property type="match status" value="1"/>
</dbReference>
<dbReference type="Gene3D" id="3.40.50.2020">
    <property type="match status" value="1"/>
</dbReference>
<dbReference type="HAMAP" id="MF_01208">
    <property type="entry name" value="PyrE"/>
    <property type="match status" value="1"/>
</dbReference>
<dbReference type="InterPro" id="IPR023031">
    <property type="entry name" value="OPRT"/>
</dbReference>
<dbReference type="InterPro" id="IPR004467">
    <property type="entry name" value="Or_phspho_trans_dom"/>
</dbReference>
<dbReference type="InterPro" id="IPR000836">
    <property type="entry name" value="PRibTrfase_dom"/>
</dbReference>
<dbReference type="InterPro" id="IPR029057">
    <property type="entry name" value="PRTase-like"/>
</dbReference>
<dbReference type="NCBIfam" id="TIGR00336">
    <property type="entry name" value="pyrE"/>
    <property type="match status" value="1"/>
</dbReference>
<dbReference type="PANTHER" id="PTHR19278">
    <property type="entry name" value="OROTATE PHOSPHORIBOSYLTRANSFERASE"/>
    <property type="match status" value="1"/>
</dbReference>
<dbReference type="PANTHER" id="PTHR19278:SF9">
    <property type="entry name" value="URIDINE 5'-MONOPHOSPHATE SYNTHASE"/>
    <property type="match status" value="1"/>
</dbReference>
<dbReference type="Pfam" id="PF00156">
    <property type="entry name" value="Pribosyltran"/>
    <property type="match status" value="1"/>
</dbReference>
<dbReference type="SUPFAM" id="SSF53271">
    <property type="entry name" value="PRTase-like"/>
    <property type="match status" value="1"/>
</dbReference>
<evidence type="ECO:0000255" key="1">
    <source>
        <dbReference type="HAMAP-Rule" id="MF_01208"/>
    </source>
</evidence>
<gene>
    <name evidence="1" type="primary">pyrE</name>
    <name type="ordered locus">sce0446</name>
</gene>
<proteinExistence type="inferred from homology"/>
<feature type="chain" id="PRO_1000138833" description="Orotate phosphoribosyltransferase">
    <location>
        <begin position="1"/>
        <end position="192"/>
    </location>
</feature>
<feature type="binding site" evidence="1">
    <location>
        <position position="101"/>
    </location>
    <ligand>
        <name>5-phospho-alpha-D-ribose 1-diphosphate</name>
        <dbReference type="ChEBI" id="CHEBI:58017"/>
        <note>ligand shared between dimeric partners</note>
    </ligand>
</feature>
<feature type="binding site" description="in other chain" evidence="1">
    <location>
        <position position="102"/>
    </location>
    <ligand>
        <name>5-phospho-alpha-D-ribose 1-diphosphate</name>
        <dbReference type="ChEBI" id="CHEBI:58017"/>
        <note>ligand shared between dimeric partners</note>
    </ligand>
</feature>
<feature type="binding site" evidence="1">
    <location>
        <position position="105"/>
    </location>
    <ligand>
        <name>5-phospho-alpha-D-ribose 1-diphosphate</name>
        <dbReference type="ChEBI" id="CHEBI:58017"/>
        <note>ligand shared between dimeric partners</note>
    </ligand>
</feature>
<feature type="binding site" evidence="1">
    <location>
        <position position="107"/>
    </location>
    <ligand>
        <name>5-phospho-alpha-D-ribose 1-diphosphate</name>
        <dbReference type="ChEBI" id="CHEBI:58017"/>
        <note>ligand shared between dimeric partners</note>
    </ligand>
</feature>
<feature type="binding site" description="in other chain" evidence="1">
    <location>
        <begin position="129"/>
        <end position="137"/>
    </location>
    <ligand>
        <name>5-phospho-alpha-D-ribose 1-diphosphate</name>
        <dbReference type="ChEBI" id="CHEBI:58017"/>
        <note>ligand shared between dimeric partners</note>
    </ligand>
</feature>
<feature type="binding site" evidence="1">
    <location>
        <position position="133"/>
    </location>
    <ligand>
        <name>orotate</name>
        <dbReference type="ChEBI" id="CHEBI:30839"/>
    </ligand>
</feature>
<feature type="binding site" evidence="1">
    <location>
        <position position="161"/>
    </location>
    <ligand>
        <name>orotate</name>
        <dbReference type="ChEBI" id="CHEBI:30839"/>
    </ligand>
</feature>
<name>PYRE_SORC5</name>
<reference key="1">
    <citation type="journal article" date="2007" name="Nat. Biotechnol.">
        <title>Complete genome sequence of the myxobacterium Sorangium cellulosum.</title>
        <authorList>
            <person name="Schneiker S."/>
            <person name="Perlova O."/>
            <person name="Kaiser O."/>
            <person name="Gerth K."/>
            <person name="Alici A."/>
            <person name="Altmeyer M.O."/>
            <person name="Bartels D."/>
            <person name="Bekel T."/>
            <person name="Beyer S."/>
            <person name="Bode E."/>
            <person name="Bode H.B."/>
            <person name="Bolten C.J."/>
            <person name="Choudhuri J.V."/>
            <person name="Doss S."/>
            <person name="Elnakady Y.A."/>
            <person name="Frank B."/>
            <person name="Gaigalat L."/>
            <person name="Goesmann A."/>
            <person name="Groeger C."/>
            <person name="Gross F."/>
            <person name="Jelsbak L."/>
            <person name="Jelsbak L."/>
            <person name="Kalinowski J."/>
            <person name="Kegler C."/>
            <person name="Knauber T."/>
            <person name="Konietzny S."/>
            <person name="Kopp M."/>
            <person name="Krause L."/>
            <person name="Krug D."/>
            <person name="Linke B."/>
            <person name="Mahmud T."/>
            <person name="Martinez-Arias R."/>
            <person name="McHardy A.C."/>
            <person name="Merai M."/>
            <person name="Meyer F."/>
            <person name="Mormann S."/>
            <person name="Munoz-Dorado J."/>
            <person name="Perez J."/>
            <person name="Pradella S."/>
            <person name="Rachid S."/>
            <person name="Raddatz G."/>
            <person name="Rosenau F."/>
            <person name="Rueckert C."/>
            <person name="Sasse F."/>
            <person name="Scharfe M."/>
            <person name="Schuster S.C."/>
            <person name="Suen G."/>
            <person name="Treuner-Lange A."/>
            <person name="Velicer G.J."/>
            <person name="Vorholter F.-J."/>
            <person name="Weissman K.J."/>
            <person name="Welch R.D."/>
            <person name="Wenzel S.C."/>
            <person name="Whitworth D.E."/>
            <person name="Wilhelm S."/>
            <person name="Wittmann C."/>
            <person name="Bloecker H."/>
            <person name="Puehler A."/>
            <person name="Mueller R."/>
        </authorList>
    </citation>
    <scope>NUCLEOTIDE SEQUENCE [LARGE SCALE GENOMIC DNA]</scope>
    <source>
        <strain>So ce56</strain>
    </source>
</reference>